<evidence type="ECO:0000255" key="1">
    <source>
        <dbReference type="HAMAP-Rule" id="MF_01303"/>
    </source>
</evidence>
<reference key="1">
    <citation type="journal article" date="2007" name="Mol. Biol. Evol.">
        <title>Chloroplast genome (cpDNA) of Cycas taitungensis and 56 cp protein-coding genes of Gnetum parvifolium: insights into cpDNA evolution and phylogeny of extant seed plants.</title>
        <authorList>
            <person name="Wu C.-S."/>
            <person name="Wang Y.-N."/>
            <person name="Liu S.-M."/>
            <person name="Chaw S.-M."/>
        </authorList>
    </citation>
    <scope>NUCLEOTIDE SEQUENCE [LARGE SCALE GENOMIC DNA]</scope>
</reference>
<feature type="chain" id="PRO_0000322039" description="Photosystem I iron-sulfur center">
    <location>
        <begin position="1"/>
        <end position="81"/>
    </location>
</feature>
<feature type="domain" description="4Fe-4S ferredoxin-type 1" evidence="1">
    <location>
        <begin position="2"/>
        <end position="31"/>
    </location>
</feature>
<feature type="domain" description="4Fe-4S ferredoxin-type 2" evidence="1">
    <location>
        <begin position="39"/>
        <end position="68"/>
    </location>
</feature>
<feature type="binding site" evidence="1">
    <location>
        <position position="11"/>
    </location>
    <ligand>
        <name>[4Fe-4S] cluster</name>
        <dbReference type="ChEBI" id="CHEBI:49883"/>
        <label>1</label>
    </ligand>
</feature>
<feature type="binding site" evidence="1">
    <location>
        <position position="14"/>
    </location>
    <ligand>
        <name>[4Fe-4S] cluster</name>
        <dbReference type="ChEBI" id="CHEBI:49883"/>
        <label>1</label>
    </ligand>
</feature>
<feature type="binding site" evidence="1">
    <location>
        <position position="17"/>
    </location>
    <ligand>
        <name>[4Fe-4S] cluster</name>
        <dbReference type="ChEBI" id="CHEBI:49883"/>
        <label>1</label>
    </ligand>
</feature>
<feature type="binding site" evidence="1">
    <location>
        <position position="21"/>
    </location>
    <ligand>
        <name>[4Fe-4S] cluster</name>
        <dbReference type="ChEBI" id="CHEBI:49883"/>
        <label>2</label>
    </ligand>
</feature>
<feature type="binding site" evidence="1">
    <location>
        <position position="48"/>
    </location>
    <ligand>
        <name>[4Fe-4S] cluster</name>
        <dbReference type="ChEBI" id="CHEBI:49883"/>
        <label>2</label>
    </ligand>
</feature>
<feature type="binding site" evidence="1">
    <location>
        <position position="51"/>
    </location>
    <ligand>
        <name>[4Fe-4S] cluster</name>
        <dbReference type="ChEBI" id="CHEBI:49883"/>
        <label>2</label>
    </ligand>
</feature>
<feature type="binding site" evidence="1">
    <location>
        <position position="54"/>
    </location>
    <ligand>
        <name>[4Fe-4S] cluster</name>
        <dbReference type="ChEBI" id="CHEBI:49883"/>
        <label>2</label>
    </ligand>
</feature>
<feature type="binding site" evidence="1">
    <location>
        <position position="58"/>
    </location>
    <ligand>
        <name>[4Fe-4S] cluster</name>
        <dbReference type="ChEBI" id="CHEBI:49883"/>
        <label>1</label>
    </ligand>
</feature>
<comment type="function">
    <text evidence="1">Apoprotein for the two 4Fe-4S centers FA and FB of photosystem I (PSI); essential for photochemical activity. FB is the terminal electron acceptor of PSI, donating electrons to ferredoxin. The C-terminus interacts with PsaA/B/D and helps assemble the protein into the PSI complex. Required for binding of PsaD and PsaE to PSI. PSI is a plastocyanin-ferredoxin oxidoreductase, converting photonic excitation into a charge separation, which transfers an electron from the donor P700 chlorophyll pair to the spectroscopically characterized acceptors A0, A1, FX, FA and FB in turn.</text>
</comment>
<comment type="catalytic activity">
    <reaction evidence="1">
        <text>reduced [plastocyanin] + hnu + oxidized [2Fe-2S]-[ferredoxin] = oxidized [plastocyanin] + reduced [2Fe-2S]-[ferredoxin]</text>
        <dbReference type="Rhea" id="RHEA:30407"/>
        <dbReference type="Rhea" id="RHEA-COMP:10000"/>
        <dbReference type="Rhea" id="RHEA-COMP:10001"/>
        <dbReference type="Rhea" id="RHEA-COMP:10039"/>
        <dbReference type="Rhea" id="RHEA-COMP:10040"/>
        <dbReference type="ChEBI" id="CHEBI:29036"/>
        <dbReference type="ChEBI" id="CHEBI:30212"/>
        <dbReference type="ChEBI" id="CHEBI:33737"/>
        <dbReference type="ChEBI" id="CHEBI:33738"/>
        <dbReference type="ChEBI" id="CHEBI:49552"/>
        <dbReference type="EC" id="1.97.1.12"/>
    </reaction>
</comment>
<comment type="cofactor">
    <cofactor evidence="1">
        <name>[4Fe-4S] cluster</name>
        <dbReference type="ChEBI" id="CHEBI:49883"/>
    </cofactor>
    <text evidence="1">Binds 2 [4Fe-4S] clusters. Cluster 2 is most probably the spectroscopically characterized electron acceptor FA and cluster 1 is most probably FB.</text>
</comment>
<comment type="subunit">
    <text evidence="1">The eukaryotic PSI reaction center is composed of at least 11 subunits.</text>
</comment>
<comment type="subcellular location">
    <subcellularLocation>
        <location evidence="1">Plastid</location>
        <location evidence="1">Chloroplast thylakoid membrane</location>
        <topology evidence="1">Peripheral membrane protein</topology>
        <orientation evidence="1">Stromal side</orientation>
    </subcellularLocation>
</comment>
<dbReference type="EC" id="1.97.1.12" evidence="1"/>
<dbReference type="EMBL" id="AP009339">
    <property type="protein sequence ID" value="BAF65009.1"/>
    <property type="molecule type" value="Genomic_DNA"/>
</dbReference>
<dbReference type="RefSeq" id="YP_001312267.1">
    <property type="nucleotide sequence ID" value="NC_009618.1"/>
</dbReference>
<dbReference type="SMR" id="A6H5P3"/>
<dbReference type="GeneID" id="5309576"/>
<dbReference type="GO" id="GO:0009535">
    <property type="term" value="C:chloroplast thylakoid membrane"/>
    <property type="evidence" value="ECO:0007669"/>
    <property type="project" value="UniProtKB-SubCell"/>
</dbReference>
<dbReference type="GO" id="GO:0009522">
    <property type="term" value="C:photosystem I"/>
    <property type="evidence" value="ECO:0007669"/>
    <property type="project" value="UniProtKB-KW"/>
</dbReference>
<dbReference type="GO" id="GO:0051539">
    <property type="term" value="F:4 iron, 4 sulfur cluster binding"/>
    <property type="evidence" value="ECO:0007669"/>
    <property type="project" value="UniProtKB-KW"/>
</dbReference>
<dbReference type="GO" id="GO:0009055">
    <property type="term" value="F:electron transfer activity"/>
    <property type="evidence" value="ECO:0007669"/>
    <property type="project" value="UniProtKB-UniRule"/>
</dbReference>
<dbReference type="GO" id="GO:0046872">
    <property type="term" value="F:metal ion binding"/>
    <property type="evidence" value="ECO:0007669"/>
    <property type="project" value="UniProtKB-KW"/>
</dbReference>
<dbReference type="GO" id="GO:0016491">
    <property type="term" value="F:oxidoreductase activity"/>
    <property type="evidence" value="ECO:0007669"/>
    <property type="project" value="UniProtKB-KW"/>
</dbReference>
<dbReference type="GO" id="GO:0009773">
    <property type="term" value="P:photosynthetic electron transport in photosystem I"/>
    <property type="evidence" value="ECO:0007669"/>
    <property type="project" value="InterPro"/>
</dbReference>
<dbReference type="FunFam" id="3.30.70.20:FF:000001">
    <property type="entry name" value="Photosystem I iron-sulfur center"/>
    <property type="match status" value="1"/>
</dbReference>
<dbReference type="Gene3D" id="3.30.70.20">
    <property type="match status" value="1"/>
</dbReference>
<dbReference type="HAMAP" id="MF_01303">
    <property type="entry name" value="PSI_PsaC"/>
    <property type="match status" value="1"/>
</dbReference>
<dbReference type="InterPro" id="IPR017896">
    <property type="entry name" value="4Fe4S_Fe-S-bd"/>
</dbReference>
<dbReference type="InterPro" id="IPR017900">
    <property type="entry name" value="4Fe4S_Fe_S_CS"/>
</dbReference>
<dbReference type="InterPro" id="IPR050157">
    <property type="entry name" value="PSI_iron-sulfur_center"/>
</dbReference>
<dbReference type="InterPro" id="IPR017491">
    <property type="entry name" value="PSI_PsaC"/>
</dbReference>
<dbReference type="NCBIfam" id="TIGR03048">
    <property type="entry name" value="PS_I_psaC"/>
    <property type="match status" value="1"/>
</dbReference>
<dbReference type="PANTHER" id="PTHR24960:SF79">
    <property type="entry name" value="PHOTOSYSTEM I IRON-SULFUR CENTER"/>
    <property type="match status" value="1"/>
</dbReference>
<dbReference type="PANTHER" id="PTHR24960">
    <property type="entry name" value="PHOTOSYSTEM I IRON-SULFUR CENTER-RELATED"/>
    <property type="match status" value="1"/>
</dbReference>
<dbReference type="Pfam" id="PF14697">
    <property type="entry name" value="Fer4_21"/>
    <property type="match status" value="1"/>
</dbReference>
<dbReference type="SUPFAM" id="SSF54862">
    <property type="entry name" value="4Fe-4S ferredoxins"/>
    <property type="match status" value="1"/>
</dbReference>
<dbReference type="PROSITE" id="PS00198">
    <property type="entry name" value="4FE4S_FER_1"/>
    <property type="match status" value="2"/>
</dbReference>
<dbReference type="PROSITE" id="PS51379">
    <property type="entry name" value="4FE4S_FER_2"/>
    <property type="match status" value="2"/>
</dbReference>
<proteinExistence type="inferred from homology"/>
<protein>
    <recommendedName>
        <fullName evidence="1">Photosystem I iron-sulfur center</fullName>
        <ecNumber evidence="1">1.97.1.12</ecNumber>
    </recommendedName>
    <alternativeName>
        <fullName evidence="1">9 kDa polypeptide</fullName>
    </alternativeName>
    <alternativeName>
        <fullName evidence="1">PSI-C</fullName>
    </alternativeName>
    <alternativeName>
        <fullName evidence="1">Photosystem I subunit VII</fullName>
    </alternativeName>
    <alternativeName>
        <fullName evidence="1">PsaC</fullName>
    </alternativeName>
</protein>
<sequence>MAHSVKIYDTCIGCTQCVRACPTDVLEMIPWEGCKAKQIASAPRTEDCVGCKRCESACPTDFLSVRVYLWHETTRSMGLAY</sequence>
<accession>A6H5P3</accession>
<geneLocation type="chloroplast"/>
<name>PSAC_CYCTA</name>
<organism>
    <name type="scientific">Cycas taitungensis</name>
    <name type="common">Prince sago</name>
    <name type="synonym">Cycas taiwaniana</name>
    <dbReference type="NCBI Taxonomy" id="54799"/>
    <lineage>
        <taxon>Eukaryota</taxon>
        <taxon>Viridiplantae</taxon>
        <taxon>Streptophyta</taxon>
        <taxon>Embryophyta</taxon>
        <taxon>Tracheophyta</taxon>
        <taxon>Spermatophyta</taxon>
        <taxon>Cycadidae</taxon>
        <taxon>Cycadales</taxon>
        <taxon>Cycadaceae</taxon>
        <taxon>Cycas</taxon>
    </lineage>
</organism>
<keyword id="KW-0004">4Fe-4S</keyword>
<keyword id="KW-0150">Chloroplast</keyword>
<keyword id="KW-0249">Electron transport</keyword>
<keyword id="KW-0408">Iron</keyword>
<keyword id="KW-0411">Iron-sulfur</keyword>
<keyword id="KW-0472">Membrane</keyword>
<keyword id="KW-0479">Metal-binding</keyword>
<keyword id="KW-0560">Oxidoreductase</keyword>
<keyword id="KW-0602">Photosynthesis</keyword>
<keyword id="KW-0603">Photosystem I</keyword>
<keyword id="KW-0934">Plastid</keyword>
<keyword id="KW-0677">Repeat</keyword>
<keyword id="KW-0793">Thylakoid</keyword>
<keyword id="KW-0813">Transport</keyword>
<gene>
    <name evidence="1" type="primary">psaC</name>
</gene>